<accession>P03568</accession>
<organismHost>
    <name type="scientific">Avena sativa</name>
    <name type="common">Oat</name>
    <dbReference type="NCBI Taxonomy" id="4498"/>
</organismHost>
<organismHost>
    <name type="scientific">Axonopus compressus</name>
    <dbReference type="NCBI Taxonomy" id="217170"/>
</organismHost>
<organismHost>
    <name type="scientific">Cenchrus americanus</name>
    <name type="common">Pearl millet</name>
    <name type="synonym">Pennisetum glaucum</name>
    <dbReference type="NCBI Taxonomy" id="4543"/>
</organismHost>
<organismHost>
    <name type="scientific">Cenchrus polystachios</name>
    <dbReference type="NCBI Taxonomy" id="281129"/>
</organismHost>
<organismHost>
    <name type="scientific">Coix lacryma-jobi</name>
    <name type="common">Job's tears</name>
    <dbReference type="NCBI Taxonomy" id="4505"/>
</organismHost>
<organismHost>
    <name type="scientific">Dactyloctenium aegyptium</name>
    <dbReference type="NCBI Taxonomy" id="270102"/>
</organismHost>
<organismHost>
    <name type="scientific">Digitaria</name>
    <dbReference type="NCBI Taxonomy" id="66017"/>
</organismHost>
<organismHost>
    <name type="scientific">Echinochloa colona</name>
    <dbReference type="NCBI Taxonomy" id="90396"/>
</organismHost>
<organismHost>
    <name type="scientific">Eleusine coracana</name>
    <name type="common">Indian finger millet</name>
    <name type="synonym">Ragi</name>
    <dbReference type="NCBI Taxonomy" id="4511"/>
</organismHost>
<organismHost>
    <name type="scientific">Eleusine indica</name>
    <name type="common">Goosegrass</name>
    <name type="synonym">Cynosurus indicus</name>
    <dbReference type="NCBI Taxonomy" id="29674"/>
</organismHost>
<organismHost>
    <name type="scientific">Hordeum vulgare</name>
    <name type="common">Barley</name>
    <dbReference type="NCBI Taxonomy" id="4513"/>
</organismHost>
<organismHost>
    <name type="scientific">Megathyrsus maximus</name>
    <dbReference type="NCBI Taxonomy" id="59788"/>
</organismHost>
<organismHost>
    <name type="scientific">Melinis repens</name>
    <name type="common">Red Natal grass</name>
    <name type="synonym">Rhynchelytrum repens</name>
    <dbReference type="NCBI Taxonomy" id="29709"/>
</organismHost>
<organismHost>
    <name type="scientific">Oryza glaberrima</name>
    <name type="common">African rice</name>
    <dbReference type="NCBI Taxonomy" id="4538"/>
</organismHost>
<organismHost>
    <name type="scientific">Oryza sativa</name>
    <name type="common">Rice</name>
    <dbReference type="NCBI Taxonomy" id="4530"/>
</organismHost>
<organismHost>
    <name type="scientific">Paspalum conjugatum</name>
    <name type="common">Hilo grass</name>
    <dbReference type="NCBI Taxonomy" id="158143"/>
</organismHost>
<organismHost>
    <name type="scientific">Paspalum notatum</name>
    <name type="common">Bahia grass</name>
    <dbReference type="NCBI Taxonomy" id="147272"/>
</organismHost>
<organismHost>
    <name type="scientific">Paspalum scrobiculatum</name>
    <dbReference type="NCBI Taxonomy" id="173849"/>
</organismHost>
<organismHost>
    <name type="scientific">Rottboellia cochinchinensis</name>
    <dbReference type="NCBI Taxonomy" id="300125"/>
</organismHost>
<organismHost>
    <name type="scientific">Saccharum officinarum</name>
    <name type="common">Sugarcane</name>
    <dbReference type="NCBI Taxonomy" id="4547"/>
</organismHost>
<organismHost>
    <name type="scientific">Setaria barbata</name>
    <dbReference type="NCBI Taxonomy" id="192628"/>
</organismHost>
<organismHost>
    <name type="scientific">Triticum aestivum</name>
    <name type="common">Wheat</name>
    <dbReference type="NCBI Taxonomy" id="4565"/>
</organismHost>
<organismHost>
    <name type="scientific">Urochloa deflexa</name>
    <dbReference type="NCBI Taxonomy" id="240436"/>
</organismHost>
<organismHost>
    <name type="scientific">Zea mays</name>
    <name type="common">Maize</name>
    <dbReference type="NCBI Taxonomy" id="4577"/>
</organismHost>
<organism>
    <name type="scientific">Maize streak virus genotype A (isolate Kenya)</name>
    <name type="common">MSV</name>
    <dbReference type="NCBI Taxonomy" id="10822"/>
    <lineage>
        <taxon>Viruses</taxon>
        <taxon>Monodnaviria</taxon>
        <taxon>Shotokuvirae</taxon>
        <taxon>Cressdnaviricota</taxon>
        <taxon>Repensiviricetes</taxon>
        <taxon>Geplafuvirales</taxon>
        <taxon>Geminiviridae</taxon>
        <taxon>Mastrevirus</taxon>
        <taxon>Maize streak virus</taxon>
    </lineage>
</organism>
<keyword id="KW-0010">Activator</keyword>
<keyword id="KW-0025">Alternative splicing</keyword>
<keyword id="KW-0190">Covalent protein-DNA linkage</keyword>
<keyword id="KW-0235">DNA replication</keyword>
<keyword id="KW-0238">DNA-binding</keyword>
<keyword id="KW-0255">Endonuclease</keyword>
<keyword id="KW-1078">G1/S host cell cycle checkpoint dysregulation by virus</keyword>
<keyword id="KW-1035">Host cytoplasm</keyword>
<keyword id="KW-1048">Host nucleus</keyword>
<keyword id="KW-0945">Host-virus interaction</keyword>
<keyword id="KW-0378">Hydrolase</keyword>
<keyword id="KW-0479">Metal-binding</keyword>
<keyword id="KW-1121">Modulation of host cell cycle by virus</keyword>
<keyword id="KW-0540">Nuclease</keyword>
<keyword id="KW-0547">Nucleotide-binding</keyword>
<keyword id="KW-0548">Nucleotidyltransferase</keyword>
<keyword id="KW-0678">Repressor</keyword>
<keyword id="KW-0808">Transferase</keyword>
<feature type="chain" id="PRO_0000222206" description="Replication-associated protein A">
    <location>
        <begin position="1"/>
        <end position="272"/>
    </location>
</feature>
<feature type="domain" description="CRESS-DNA virus Rep endonuclease" evidence="2">
    <location>
        <begin position="11"/>
        <end position="114"/>
    </location>
</feature>
<feature type="region of interest" description="Oligomerization" evidence="1">
    <location>
        <begin position="175"/>
        <end position="187"/>
    </location>
</feature>
<feature type="region of interest" description="Binding to RBR1" evidence="1">
    <location>
        <begin position="198"/>
        <end position="202"/>
    </location>
</feature>
<feature type="region of interest" description="Transactivation" evidence="1">
    <location>
        <begin position="221"/>
        <end position="230"/>
    </location>
</feature>
<feature type="region of interest" description="Disordered" evidence="3">
    <location>
        <begin position="245"/>
        <end position="272"/>
    </location>
</feature>
<feature type="short sequence motif" description="RCR-1" evidence="2">
    <location>
        <begin position="18"/>
        <end position="21"/>
    </location>
</feature>
<feature type="short sequence motif" description="RCR-2" evidence="2">
    <location>
        <begin position="60"/>
        <end position="62"/>
    </location>
</feature>
<feature type="short sequence motif" description="RCR-3" evidence="2">
    <location>
        <begin position="100"/>
        <end position="103"/>
    </location>
</feature>
<feature type="compositionally biased region" description="Polar residues" evidence="3">
    <location>
        <begin position="254"/>
        <end position="265"/>
    </location>
</feature>
<feature type="active site" description="For DNA cleavage activity" evidence="2">
    <location>
        <position position="100"/>
    </location>
</feature>
<feature type="binding site" evidence="2">
    <location>
        <position position="52"/>
    </location>
    <ligand>
        <name>a divalent metal cation</name>
        <dbReference type="ChEBI" id="CHEBI:60240"/>
    </ligand>
</feature>
<feature type="binding site" evidence="2">
    <location>
        <position position="60"/>
    </location>
    <ligand>
        <name>a divalent metal cation</name>
        <dbReference type="ChEBI" id="CHEBI:60240"/>
    </ligand>
</feature>
<feature type="binding site" evidence="2">
    <location>
        <position position="62"/>
    </location>
    <ligand>
        <name>a divalent metal cation</name>
        <dbReference type="ChEBI" id="CHEBI:60240"/>
    </ligand>
</feature>
<feature type="binding site" evidence="2">
    <location>
        <position position="104"/>
    </location>
    <ligand>
        <name>a divalent metal cation</name>
        <dbReference type="ChEBI" id="CHEBI:60240"/>
    </ligand>
</feature>
<reference key="1">
    <citation type="journal article" date="1984" name="Nucleic Acids Res.">
        <title>Physical structure and genetic organisation of the genome of maize streak virus (Kenyan isolate).</title>
        <authorList>
            <person name="Howell S.H."/>
        </authorList>
    </citation>
    <scope>NUCLEOTIDE SEQUENCE [GENOMIC DNA]</scope>
</reference>
<comment type="function">
    <text evidence="1">Implicated in enhancement of V-sense gene expression. Acts a an inhibitor of C-sense gene transcription (By similarity).</text>
</comment>
<comment type="cofactor">
    <cofactor evidence="2">
        <name>Mg(2+)</name>
        <dbReference type="ChEBI" id="CHEBI:18420"/>
    </cofactor>
    <cofactor evidence="2">
        <name>Mn(2+)</name>
        <dbReference type="ChEBI" id="CHEBI:29035"/>
    </cofactor>
    <text evidence="2">Divalent metal cations, possibly Mg(2+) or Mn(2+).</text>
</comment>
<comment type="subunit">
    <text evidence="1">Homooligomer. Interacts with host retinoblastoma-related protein 1 (RBR1), and may thereby deregulate the host cell cycle. Part of the C- and V-complexes which are RepA-Rep-DNA complexes involved in the c-sense and v-sense transcription (By similarity).</text>
</comment>
<comment type="subcellular location">
    <subcellularLocation>
        <location evidence="1">Host nucleus</location>
    </subcellularLocation>
    <subcellularLocation>
        <location evidence="1">Host cytoplasm</location>
    </subcellularLocation>
</comment>
<comment type="alternative products">
    <event type="alternative splicing"/>
    <isoform>
        <id>P03568-1</id>
        <name>RepA</name>
        <sequence type="displayed"/>
    </isoform>
    <isoform>
        <id>P14988-1</id>
        <name>Rep</name>
        <sequence type="external"/>
    </isoform>
</comment>
<comment type="domain">
    <text>There are 3 rolling circle replication (RCR) motifs. RCR-2 may be involved in metal coordination. RCR-3 is required for phosphodiester bond cleavage for initiation of RCR.</text>
</comment>
<comment type="miscellaneous">
    <molecule>Isoform RepA</molecule>
    <text>Produced from the unspliced transcript.</text>
</comment>
<comment type="similarity">
    <text evidence="4">Belongs to the geminiviridae Rep protein family.</text>
</comment>
<name>REPA_MSVK</name>
<protein>
    <recommendedName>
        <fullName>Replication-associated protein A</fullName>
        <shortName>RepA</shortName>
        <ecNumber>3.1.21.-</ecNumber>
    </recommendedName>
</protein>
<evidence type="ECO:0000250" key="1"/>
<evidence type="ECO:0000255" key="2">
    <source>
        <dbReference type="PROSITE-ProRule" id="PRU01364"/>
    </source>
</evidence>
<evidence type="ECO:0000256" key="3">
    <source>
        <dbReference type="SAM" id="MobiDB-lite"/>
    </source>
</evidence>
<evidence type="ECO:0000305" key="4"/>
<sequence>MASSSSNRQFSHRNANTFLTYPKCPENPEIACQMIWELVVRWIPKYILCAREAHKDGSLHLHALLQTEKPVRISDSRFFDINGFHPNIQSAKSVNRVRDYILKEPLAVFERGTFIPRKSPFLGKSDSEVKEKKPSKDEIMRDIISHSTSKEEYLSMIQKELPFDWSTKLQYFEYSANKLFPEIQEEFTNPHPPSSPDLLCNESINDWLQPNIFQVSPEAYMLLQPACYTLDDAISDLQWMDSVSSHQMKDQESRASTSSAQQEQENLLGPEA</sequence>
<gene>
    <name type="ORF">C1</name>
</gene>
<dbReference type="EC" id="3.1.21.-"/>
<dbReference type="EMBL" id="X01089">
    <property type="protein sequence ID" value="CAB37355.1"/>
    <property type="molecule type" value="Genomic_DNA"/>
</dbReference>
<dbReference type="PIR" id="A04171">
    <property type="entry name" value="QQCVPZ"/>
</dbReference>
<dbReference type="SMR" id="P03568"/>
<dbReference type="Proteomes" id="UP000008869">
    <property type="component" value="Genome"/>
</dbReference>
<dbReference type="GO" id="GO:0030430">
    <property type="term" value="C:host cell cytoplasm"/>
    <property type="evidence" value="ECO:0007669"/>
    <property type="project" value="UniProtKB-SubCell"/>
</dbReference>
<dbReference type="GO" id="GO:0042025">
    <property type="term" value="C:host cell nucleus"/>
    <property type="evidence" value="ECO:0007669"/>
    <property type="project" value="UniProtKB-SubCell"/>
</dbReference>
<dbReference type="GO" id="GO:0003677">
    <property type="term" value="F:DNA binding"/>
    <property type="evidence" value="ECO:0007669"/>
    <property type="project" value="UniProtKB-KW"/>
</dbReference>
<dbReference type="GO" id="GO:0016888">
    <property type="term" value="F:endodeoxyribonuclease activity, producing 5'-phosphomonoesters"/>
    <property type="evidence" value="ECO:0007669"/>
    <property type="project" value="InterPro"/>
</dbReference>
<dbReference type="GO" id="GO:0046872">
    <property type="term" value="F:metal ion binding"/>
    <property type="evidence" value="ECO:0007669"/>
    <property type="project" value="UniProtKB-KW"/>
</dbReference>
<dbReference type="GO" id="GO:0000166">
    <property type="term" value="F:nucleotide binding"/>
    <property type="evidence" value="ECO:0007669"/>
    <property type="project" value="UniProtKB-KW"/>
</dbReference>
<dbReference type="GO" id="GO:0016779">
    <property type="term" value="F:nucleotidyltransferase activity"/>
    <property type="evidence" value="ECO:0007669"/>
    <property type="project" value="UniProtKB-KW"/>
</dbReference>
<dbReference type="GO" id="GO:0005198">
    <property type="term" value="F:structural molecule activity"/>
    <property type="evidence" value="ECO:0007669"/>
    <property type="project" value="InterPro"/>
</dbReference>
<dbReference type="GO" id="GO:0006260">
    <property type="term" value="P:DNA replication"/>
    <property type="evidence" value="ECO:0007669"/>
    <property type="project" value="UniProtKB-KW"/>
</dbReference>
<dbReference type="GO" id="GO:0039645">
    <property type="term" value="P:symbiont-mediated perturbation of host cell cycle G1/S transition checkpoint"/>
    <property type="evidence" value="ECO:0007669"/>
    <property type="project" value="UniProtKB-KW"/>
</dbReference>
<dbReference type="Gene3D" id="3.40.1310.20">
    <property type="match status" value="1"/>
</dbReference>
<dbReference type="InterPro" id="IPR049912">
    <property type="entry name" value="CRESS_DNA_REP"/>
</dbReference>
<dbReference type="InterPro" id="IPR001146">
    <property type="entry name" value="Gemini_AL1_MSV"/>
</dbReference>
<dbReference type="InterPro" id="IPR001191">
    <property type="entry name" value="Gemini_AL1_REP"/>
</dbReference>
<dbReference type="InterPro" id="IPR022692">
    <property type="entry name" value="Gemini_AL1_REP_central"/>
</dbReference>
<dbReference type="Pfam" id="PF00799">
    <property type="entry name" value="Gemini_AL1"/>
    <property type="match status" value="1"/>
</dbReference>
<dbReference type="Pfam" id="PF08283">
    <property type="entry name" value="Gemini_AL1_M"/>
    <property type="match status" value="1"/>
</dbReference>
<dbReference type="PRINTS" id="PR00227">
    <property type="entry name" value="GEMCOATAL1"/>
</dbReference>
<dbReference type="PRINTS" id="PR00229">
    <property type="entry name" value="GEMCOATMSVL1"/>
</dbReference>
<dbReference type="SUPFAM" id="SSF55464">
    <property type="entry name" value="Origin of replication-binding domain, RBD-like"/>
    <property type="match status" value="1"/>
</dbReference>
<dbReference type="PROSITE" id="PS52020">
    <property type="entry name" value="CRESS_DNA_REP"/>
    <property type="match status" value="1"/>
</dbReference>
<proteinExistence type="inferred from homology"/>